<gene>
    <name evidence="1" type="primary">trmD</name>
    <name type="ordered locus">Bcen_0592</name>
</gene>
<sequence>MNQVTESAVQFDVVTLFPEMFRALTDWGITSRAVKQGRFGLRTWNPRDFTTDNYRTVDDRPYGGGPGMVMLARPLEAAIDAAKAAQAEQGIASTRVVMMSPQGAPLTHDRAVRMAQEPGVVVLCGRYEAIDQRLLDRCVDEEISLGDFVLSGGELPAMAMMDAVVRLLPGVLNDSLSAVQDSFADGLLDCPHYTRPEEYDGVRVPDVLLGGHHAEIEKWRRQEALRNTLRKRPDLIVRARREKLLSRADEAWLANLAREAKDAS</sequence>
<comment type="function">
    <text evidence="1">Specifically methylates guanosine-37 in various tRNAs.</text>
</comment>
<comment type="catalytic activity">
    <reaction evidence="1">
        <text>guanosine(37) in tRNA + S-adenosyl-L-methionine = N(1)-methylguanosine(37) in tRNA + S-adenosyl-L-homocysteine + H(+)</text>
        <dbReference type="Rhea" id="RHEA:36899"/>
        <dbReference type="Rhea" id="RHEA-COMP:10145"/>
        <dbReference type="Rhea" id="RHEA-COMP:10147"/>
        <dbReference type="ChEBI" id="CHEBI:15378"/>
        <dbReference type="ChEBI" id="CHEBI:57856"/>
        <dbReference type="ChEBI" id="CHEBI:59789"/>
        <dbReference type="ChEBI" id="CHEBI:73542"/>
        <dbReference type="ChEBI" id="CHEBI:74269"/>
        <dbReference type="EC" id="2.1.1.228"/>
    </reaction>
</comment>
<comment type="subunit">
    <text evidence="1">Homodimer.</text>
</comment>
<comment type="subcellular location">
    <subcellularLocation>
        <location evidence="1">Cytoplasm</location>
    </subcellularLocation>
</comment>
<comment type="similarity">
    <text evidence="1">Belongs to the RNA methyltransferase TrmD family.</text>
</comment>
<feature type="chain" id="PRO_0000257395" description="tRNA (guanine-N(1)-)-methyltransferase">
    <location>
        <begin position="1"/>
        <end position="264"/>
    </location>
</feature>
<feature type="binding site" evidence="1">
    <location>
        <position position="125"/>
    </location>
    <ligand>
        <name>S-adenosyl-L-methionine</name>
        <dbReference type="ChEBI" id="CHEBI:59789"/>
    </ligand>
</feature>
<feature type="binding site" evidence="1">
    <location>
        <begin position="145"/>
        <end position="150"/>
    </location>
    <ligand>
        <name>S-adenosyl-L-methionine</name>
        <dbReference type="ChEBI" id="CHEBI:59789"/>
    </ligand>
</feature>
<evidence type="ECO:0000255" key="1">
    <source>
        <dbReference type="HAMAP-Rule" id="MF_00605"/>
    </source>
</evidence>
<accession>Q1BY02</accession>
<organism>
    <name type="scientific">Burkholderia orbicola (strain AU 1054)</name>
    <dbReference type="NCBI Taxonomy" id="331271"/>
    <lineage>
        <taxon>Bacteria</taxon>
        <taxon>Pseudomonadati</taxon>
        <taxon>Pseudomonadota</taxon>
        <taxon>Betaproteobacteria</taxon>
        <taxon>Burkholderiales</taxon>
        <taxon>Burkholderiaceae</taxon>
        <taxon>Burkholderia</taxon>
        <taxon>Burkholderia cepacia complex</taxon>
        <taxon>Burkholderia orbicola</taxon>
    </lineage>
</organism>
<name>TRMD_BURO1</name>
<reference key="1">
    <citation type="submission" date="2006-05" db="EMBL/GenBank/DDBJ databases">
        <title>Complete sequence of chromosome 1 of Burkholderia cenocepacia AU 1054.</title>
        <authorList>
            <consortium name="US DOE Joint Genome Institute"/>
            <person name="Copeland A."/>
            <person name="Lucas S."/>
            <person name="Lapidus A."/>
            <person name="Barry K."/>
            <person name="Detter J.C."/>
            <person name="Glavina del Rio T."/>
            <person name="Hammon N."/>
            <person name="Israni S."/>
            <person name="Dalin E."/>
            <person name="Tice H."/>
            <person name="Pitluck S."/>
            <person name="Chain P."/>
            <person name="Malfatti S."/>
            <person name="Shin M."/>
            <person name="Vergez L."/>
            <person name="Schmutz J."/>
            <person name="Larimer F."/>
            <person name="Land M."/>
            <person name="Hauser L."/>
            <person name="Kyrpides N."/>
            <person name="Lykidis A."/>
            <person name="LiPuma J.J."/>
            <person name="Konstantinidis K."/>
            <person name="Tiedje J.M."/>
            <person name="Richardson P."/>
        </authorList>
    </citation>
    <scope>NUCLEOTIDE SEQUENCE [LARGE SCALE GENOMIC DNA]</scope>
    <source>
        <strain>AU 1054</strain>
    </source>
</reference>
<proteinExistence type="inferred from homology"/>
<protein>
    <recommendedName>
        <fullName evidence="1">tRNA (guanine-N(1)-)-methyltransferase</fullName>
        <ecNumber evidence="1">2.1.1.228</ecNumber>
    </recommendedName>
    <alternativeName>
        <fullName evidence="1">M1G-methyltransferase</fullName>
    </alternativeName>
    <alternativeName>
        <fullName evidence="1">tRNA [GM37] methyltransferase</fullName>
    </alternativeName>
</protein>
<dbReference type="EC" id="2.1.1.228" evidence="1"/>
<dbReference type="EMBL" id="CP000378">
    <property type="protein sequence ID" value="ABF75503.1"/>
    <property type="molecule type" value="Genomic_DNA"/>
</dbReference>
<dbReference type="SMR" id="Q1BY02"/>
<dbReference type="HOGENOM" id="CLU_047363_0_2_4"/>
<dbReference type="GO" id="GO:0005829">
    <property type="term" value="C:cytosol"/>
    <property type="evidence" value="ECO:0007669"/>
    <property type="project" value="TreeGrafter"/>
</dbReference>
<dbReference type="GO" id="GO:0052906">
    <property type="term" value="F:tRNA (guanine(37)-N1)-methyltransferase activity"/>
    <property type="evidence" value="ECO:0007669"/>
    <property type="project" value="UniProtKB-UniRule"/>
</dbReference>
<dbReference type="GO" id="GO:0002939">
    <property type="term" value="P:tRNA N1-guanine methylation"/>
    <property type="evidence" value="ECO:0007669"/>
    <property type="project" value="TreeGrafter"/>
</dbReference>
<dbReference type="CDD" id="cd18080">
    <property type="entry name" value="TrmD-like"/>
    <property type="match status" value="1"/>
</dbReference>
<dbReference type="FunFam" id="1.10.1270.20:FF:000001">
    <property type="entry name" value="tRNA (guanine-N(1)-)-methyltransferase"/>
    <property type="match status" value="1"/>
</dbReference>
<dbReference type="FunFam" id="3.40.1280.10:FF:000001">
    <property type="entry name" value="tRNA (guanine-N(1)-)-methyltransferase"/>
    <property type="match status" value="1"/>
</dbReference>
<dbReference type="Gene3D" id="3.40.1280.10">
    <property type="match status" value="1"/>
</dbReference>
<dbReference type="Gene3D" id="1.10.1270.20">
    <property type="entry name" value="tRNA(m1g37)methyltransferase, domain 2"/>
    <property type="match status" value="1"/>
</dbReference>
<dbReference type="HAMAP" id="MF_00605">
    <property type="entry name" value="TrmD"/>
    <property type="match status" value="1"/>
</dbReference>
<dbReference type="InterPro" id="IPR029028">
    <property type="entry name" value="Alpha/beta_knot_MTases"/>
</dbReference>
<dbReference type="InterPro" id="IPR023148">
    <property type="entry name" value="tRNA_m1G_MeTrfase_C_sf"/>
</dbReference>
<dbReference type="InterPro" id="IPR002649">
    <property type="entry name" value="tRNA_m1G_MeTrfase_TrmD"/>
</dbReference>
<dbReference type="InterPro" id="IPR029026">
    <property type="entry name" value="tRNA_m1G_MTases_N"/>
</dbReference>
<dbReference type="InterPro" id="IPR016009">
    <property type="entry name" value="tRNA_MeTrfase_TRMD/TRM10"/>
</dbReference>
<dbReference type="NCBIfam" id="NF000648">
    <property type="entry name" value="PRK00026.1"/>
    <property type="match status" value="1"/>
</dbReference>
<dbReference type="NCBIfam" id="TIGR00088">
    <property type="entry name" value="trmD"/>
    <property type="match status" value="1"/>
</dbReference>
<dbReference type="PANTHER" id="PTHR46417">
    <property type="entry name" value="TRNA (GUANINE-N(1)-)-METHYLTRANSFERASE"/>
    <property type="match status" value="1"/>
</dbReference>
<dbReference type="PANTHER" id="PTHR46417:SF1">
    <property type="entry name" value="TRNA (GUANINE-N(1)-)-METHYLTRANSFERASE"/>
    <property type="match status" value="1"/>
</dbReference>
<dbReference type="Pfam" id="PF01746">
    <property type="entry name" value="tRNA_m1G_MT"/>
    <property type="match status" value="1"/>
</dbReference>
<dbReference type="PIRSF" id="PIRSF000386">
    <property type="entry name" value="tRNA_mtase"/>
    <property type="match status" value="1"/>
</dbReference>
<dbReference type="SUPFAM" id="SSF75217">
    <property type="entry name" value="alpha/beta knot"/>
    <property type="match status" value="1"/>
</dbReference>
<keyword id="KW-0963">Cytoplasm</keyword>
<keyword id="KW-0489">Methyltransferase</keyword>
<keyword id="KW-0949">S-adenosyl-L-methionine</keyword>
<keyword id="KW-0808">Transferase</keyword>
<keyword id="KW-0819">tRNA processing</keyword>